<proteinExistence type="evidence at transcript level"/>
<protein>
    <recommendedName>
        <fullName>Synaptotagmin-13</fullName>
    </recommendedName>
    <alternativeName>
        <fullName>Synaptotagmin XIII</fullName>
        <shortName>SytXIII</shortName>
    </alternativeName>
</protein>
<organism>
    <name type="scientific">Rattus norvegicus</name>
    <name type="common">Rat</name>
    <dbReference type="NCBI Taxonomy" id="10116"/>
    <lineage>
        <taxon>Eukaryota</taxon>
        <taxon>Metazoa</taxon>
        <taxon>Chordata</taxon>
        <taxon>Craniata</taxon>
        <taxon>Vertebrata</taxon>
        <taxon>Euteleostomi</taxon>
        <taxon>Mammalia</taxon>
        <taxon>Eutheria</taxon>
        <taxon>Euarchontoglires</taxon>
        <taxon>Glires</taxon>
        <taxon>Rodentia</taxon>
        <taxon>Myomorpha</taxon>
        <taxon>Muroidea</taxon>
        <taxon>Muridae</taxon>
        <taxon>Murinae</taxon>
        <taxon>Rattus</taxon>
    </lineage>
</organism>
<comment type="function">
    <text evidence="1">May be involved in transport vesicle docking to the plasma membrane.</text>
</comment>
<comment type="subunit">
    <text evidence="1">Interacts with NRXN1.</text>
</comment>
<comment type="subcellular location">
    <subcellularLocation>
        <location evidence="1">Membrane</location>
        <topology evidence="1">Single-pass membrane protein</topology>
    </subcellularLocation>
</comment>
<comment type="tissue specificity">
    <text evidence="4">Expressed in brain, spleen, kidney and testis.</text>
</comment>
<comment type="domain">
    <text evidence="1">The first C2 domain/C2A does not mediate Ca(2+)-dependent phospholipid binding.</text>
</comment>
<comment type="domain">
    <text evidence="1">The second C2 domain/C2B domain binds phospholipids regardless of whether calcium is present.</text>
</comment>
<comment type="similarity">
    <text evidence="5">Belongs to the synaptotagmin family.</text>
</comment>
<evidence type="ECO:0000250" key="1"/>
<evidence type="ECO:0000255" key="2"/>
<evidence type="ECO:0000255" key="3">
    <source>
        <dbReference type="PROSITE-ProRule" id="PRU00041"/>
    </source>
</evidence>
<evidence type="ECO:0000269" key="4">
    <source>
    </source>
</evidence>
<evidence type="ECO:0000305" key="5"/>
<dbReference type="EMBL" id="AF313453">
    <property type="protein sequence ID" value="AAG30575.1"/>
    <property type="molecule type" value="mRNA"/>
</dbReference>
<dbReference type="EMBL" id="AF375466">
    <property type="protein sequence ID" value="AAK56961.1"/>
    <property type="molecule type" value="mRNA"/>
</dbReference>
<dbReference type="RefSeq" id="NP_110466.2">
    <property type="nucleotide sequence ID" value="NM_030839.3"/>
</dbReference>
<dbReference type="SMR" id="Q925B5"/>
<dbReference type="BioGRID" id="249494">
    <property type="interactions" value="1"/>
</dbReference>
<dbReference type="FunCoup" id="Q925B5">
    <property type="interactions" value="782"/>
</dbReference>
<dbReference type="STRING" id="10116.ENSRNOP00000011459"/>
<dbReference type="iPTMnet" id="Q925B5"/>
<dbReference type="PhosphoSitePlus" id="Q925B5"/>
<dbReference type="PaxDb" id="10116-ENSRNOP00000011459"/>
<dbReference type="GeneID" id="80977"/>
<dbReference type="KEGG" id="rno:80977"/>
<dbReference type="UCSC" id="RGD:621877">
    <property type="organism name" value="rat"/>
</dbReference>
<dbReference type="AGR" id="RGD:621877"/>
<dbReference type="CTD" id="57586"/>
<dbReference type="RGD" id="621877">
    <property type="gene designation" value="Syt13"/>
</dbReference>
<dbReference type="eggNOG" id="KOG1028">
    <property type="taxonomic scope" value="Eukaryota"/>
</dbReference>
<dbReference type="InParanoid" id="Q925B5"/>
<dbReference type="PhylomeDB" id="Q925B5"/>
<dbReference type="TreeFam" id="TF315600"/>
<dbReference type="PRO" id="PR:Q925B5"/>
<dbReference type="Proteomes" id="UP000002494">
    <property type="component" value="Unplaced"/>
</dbReference>
<dbReference type="GO" id="GO:0030424">
    <property type="term" value="C:axon"/>
    <property type="evidence" value="ECO:0000318"/>
    <property type="project" value="GO_Central"/>
</dbReference>
<dbReference type="GO" id="GO:0031045">
    <property type="term" value="C:dense core granule"/>
    <property type="evidence" value="ECO:0000318"/>
    <property type="project" value="GO_Central"/>
</dbReference>
<dbReference type="GO" id="GO:0070382">
    <property type="term" value="C:exocytic vesicle"/>
    <property type="evidence" value="ECO:0000318"/>
    <property type="project" value="GO_Central"/>
</dbReference>
<dbReference type="GO" id="GO:0005886">
    <property type="term" value="C:plasma membrane"/>
    <property type="evidence" value="ECO:0000266"/>
    <property type="project" value="RGD"/>
</dbReference>
<dbReference type="GO" id="GO:0030672">
    <property type="term" value="C:synaptic vesicle membrane"/>
    <property type="evidence" value="ECO:0000318"/>
    <property type="project" value="GO_Central"/>
</dbReference>
<dbReference type="GO" id="GO:0061891">
    <property type="term" value="F:calcium ion sensor activity"/>
    <property type="evidence" value="ECO:0000318"/>
    <property type="project" value="GO_Central"/>
</dbReference>
<dbReference type="GO" id="GO:0005544">
    <property type="term" value="F:calcium-dependent phospholipid binding"/>
    <property type="evidence" value="ECO:0000318"/>
    <property type="project" value="GO_Central"/>
</dbReference>
<dbReference type="GO" id="GO:0000149">
    <property type="term" value="F:SNARE binding"/>
    <property type="evidence" value="ECO:0000318"/>
    <property type="project" value="GO_Central"/>
</dbReference>
<dbReference type="GO" id="GO:0099502">
    <property type="term" value="P:calcium-dependent activation of synaptic vesicle fusion"/>
    <property type="evidence" value="ECO:0000318"/>
    <property type="project" value="GO_Central"/>
</dbReference>
<dbReference type="GO" id="GO:0017158">
    <property type="term" value="P:regulation of calcium ion-dependent exocytosis"/>
    <property type="evidence" value="ECO:0000318"/>
    <property type="project" value="GO_Central"/>
</dbReference>
<dbReference type="GO" id="GO:2000300">
    <property type="term" value="P:regulation of synaptic vesicle exocytosis"/>
    <property type="evidence" value="ECO:0000318"/>
    <property type="project" value="GO_Central"/>
</dbReference>
<dbReference type="GO" id="GO:0016192">
    <property type="term" value="P:vesicle-mediated transport"/>
    <property type="evidence" value="ECO:0000266"/>
    <property type="project" value="RGD"/>
</dbReference>
<dbReference type="CDD" id="cd08407">
    <property type="entry name" value="C2B_Synaptotagmin-13"/>
    <property type="match status" value="1"/>
</dbReference>
<dbReference type="FunFam" id="2.60.40.150:FF:000101">
    <property type="entry name" value="Synaptotagmin 13"/>
    <property type="match status" value="1"/>
</dbReference>
<dbReference type="FunFam" id="2.60.40.150:FF:000145">
    <property type="entry name" value="Synaptotagmin 13"/>
    <property type="match status" value="1"/>
</dbReference>
<dbReference type="Gene3D" id="2.60.40.150">
    <property type="entry name" value="C2 domain"/>
    <property type="match status" value="2"/>
</dbReference>
<dbReference type="InterPro" id="IPR000008">
    <property type="entry name" value="C2_dom"/>
</dbReference>
<dbReference type="InterPro" id="IPR035892">
    <property type="entry name" value="C2_domain_sf"/>
</dbReference>
<dbReference type="InterPro" id="IPR028692">
    <property type="entry name" value="Syt13_C2B"/>
</dbReference>
<dbReference type="PANTHER" id="PTHR10024">
    <property type="entry name" value="SYNAPTOTAGMIN"/>
    <property type="match status" value="1"/>
</dbReference>
<dbReference type="PANTHER" id="PTHR10024:SF250">
    <property type="entry name" value="SYNAPTOTAGMIN-13"/>
    <property type="match status" value="1"/>
</dbReference>
<dbReference type="Pfam" id="PF00168">
    <property type="entry name" value="C2"/>
    <property type="match status" value="2"/>
</dbReference>
<dbReference type="SMART" id="SM00239">
    <property type="entry name" value="C2"/>
    <property type="match status" value="1"/>
</dbReference>
<dbReference type="SUPFAM" id="SSF49562">
    <property type="entry name" value="C2 domain (Calcium/lipid-binding domain, CaLB)"/>
    <property type="match status" value="2"/>
</dbReference>
<dbReference type="PROSITE" id="PS50004">
    <property type="entry name" value="C2"/>
    <property type="match status" value="2"/>
</dbReference>
<feature type="chain" id="PRO_0000183977" description="Synaptotagmin-13">
    <location>
        <begin position="1"/>
        <end position="426"/>
    </location>
</feature>
<feature type="topological domain" description="Vesicular" evidence="2">
    <location>
        <begin position="1"/>
        <end position="6"/>
    </location>
</feature>
<feature type="transmembrane region" description="Helical" evidence="2">
    <location>
        <begin position="7"/>
        <end position="29"/>
    </location>
</feature>
<feature type="topological domain" description="Cytoplasmic" evidence="2">
    <location>
        <begin position="30"/>
        <end position="426"/>
    </location>
</feature>
<feature type="domain" description="C2 1" evidence="3">
    <location>
        <begin position="158"/>
        <end position="275"/>
    </location>
</feature>
<feature type="domain" description="C2 2" evidence="3">
    <location>
        <begin position="287"/>
        <end position="422"/>
    </location>
</feature>
<feature type="sequence conflict" description="In Ref. 1; AAG30575." evidence="5" ref="1">
    <original>T</original>
    <variation>A</variation>
    <location>
        <position position="226"/>
    </location>
</feature>
<reference key="1">
    <citation type="journal article" date="2001" name="Eur. J. Cell Biol.">
        <title>Synaptotagmin 13: structure and expression of a novel synaptotagmin.</title>
        <authorList>
            <person name="von Poser C."/>
            <person name="Suedhof T.C."/>
        </authorList>
    </citation>
    <scope>NUCLEOTIDE SEQUENCE [MRNA]</scope>
    <scope>TISSUE SPECIFICITY</scope>
    <source>
        <tissue>Brain</tissue>
    </source>
</reference>
<sequence>MVLSVPVIALGATLGTATSILALCGVTCLCRHMHPKKGLLPRDREPDPEKARPGVLQAAQQFNVKKSTEPVQPRPLLKFPDIYGPRPAVTAPEVINYADYTLGTTEESAAPASPQAQSDSRLKRQVTEELFILPQNGVVEDVCVMETWNPEKAASWNQAPKLHFRLDYDQKKAELFVTSLEAVTSDHEGGCDCYIQGSVAVKTGSVEAQTALKKRQLHTTWEEGLTLPLGEEELPTATLTLTLRTCDRFSRHSVIGELRLGLNGASVPLGTAQWGELKTTAKEPSAGTGEVLLSISYLPAANRLLVVLIKAKNLHSNQSKELLGKDVSVKVTLKHQAQKLKKKQTKRAKHKINPVWNEMIMFELPDDLLQASSVELEVLGQGEEGPSCELGRCSLGLHASGSERSHWEEMLKNPRRQIAMWHQLHL</sequence>
<accession>Q925B5</accession>
<accession>Q9ERD5</accession>
<gene>
    <name type="primary">Syt13</name>
</gene>
<keyword id="KW-0472">Membrane</keyword>
<keyword id="KW-1185">Reference proteome</keyword>
<keyword id="KW-0677">Repeat</keyword>
<keyword id="KW-0812">Transmembrane</keyword>
<keyword id="KW-1133">Transmembrane helix</keyword>
<name>SYT13_RAT</name>